<reference key="1">
    <citation type="journal article" date="2009" name="ISME J.">
        <title>The genome sequence of the psychrophilic archaeon, Methanococcoides burtonii: the role of genome evolution in cold adaptation.</title>
        <authorList>
            <person name="Allen M.A."/>
            <person name="Lauro F.M."/>
            <person name="Williams T.J."/>
            <person name="Burg D."/>
            <person name="Siddiqui K.S."/>
            <person name="De Francisci D."/>
            <person name="Chong K.W."/>
            <person name="Pilak O."/>
            <person name="Chew H.H."/>
            <person name="De Maere M.Z."/>
            <person name="Ting L."/>
            <person name="Katrib M."/>
            <person name="Ng C."/>
            <person name="Sowers K.R."/>
            <person name="Galperin M.Y."/>
            <person name="Anderson I.J."/>
            <person name="Ivanova N."/>
            <person name="Dalin E."/>
            <person name="Martinez M."/>
            <person name="Lapidus A."/>
            <person name="Hauser L."/>
            <person name="Land M."/>
            <person name="Thomas T."/>
            <person name="Cavicchioli R."/>
        </authorList>
    </citation>
    <scope>NUCLEOTIDE SEQUENCE [LARGE SCALE GENOMIC DNA]</scope>
    <source>
        <strain>DSM 6242 / NBRC 107633 / OCM 468 / ACE-M</strain>
    </source>
</reference>
<keyword id="KW-0687">Ribonucleoprotein</keyword>
<keyword id="KW-0690">Ribosome biogenesis</keyword>
<keyword id="KW-0698">rRNA processing</keyword>
<gene>
    <name evidence="1" type="primary">nop10</name>
    <name type="ordered locus">Mbur_1397</name>
</gene>
<sequence length="56" mass="6437">MGNKLRKCTQCNIYTLKDNCPECGESSGNPLPARFSPLDTYGKYRRISKKREMEHA</sequence>
<feature type="chain" id="PRO_1000083703" description="Ribosome biogenesis protein Nop10">
    <location>
        <begin position="1"/>
        <end position="56"/>
    </location>
</feature>
<protein>
    <recommendedName>
        <fullName evidence="1">Ribosome biogenesis protein Nop10</fullName>
    </recommendedName>
</protein>
<accession>Q12W64</accession>
<name>NOP10_METBU</name>
<comment type="function">
    <text evidence="1">Involved in ribosome biogenesis; more specifically in 18S rRNA pseudouridylation and in cleavage of pre-rRNA.</text>
</comment>
<comment type="similarity">
    <text evidence="1">Belongs to the NOP10 family.</text>
</comment>
<proteinExistence type="inferred from homology"/>
<dbReference type="EMBL" id="CP000300">
    <property type="protein sequence ID" value="ABE52312.1"/>
    <property type="molecule type" value="Genomic_DNA"/>
</dbReference>
<dbReference type="RefSeq" id="WP_011499457.1">
    <property type="nucleotide sequence ID" value="NC_007955.1"/>
</dbReference>
<dbReference type="SMR" id="Q12W64"/>
<dbReference type="STRING" id="259564.Mbur_1397"/>
<dbReference type="GeneID" id="32154207"/>
<dbReference type="KEGG" id="mbu:Mbur_1397"/>
<dbReference type="HOGENOM" id="CLU_196480_1_0_2"/>
<dbReference type="OrthoDB" id="7259at2157"/>
<dbReference type="Proteomes" id="UP000001979">
    <property type="component" value="Chromosome"/>
</dbReference>
<dbReference type="GO" id="GO:1990904">
    <property type="term" value="C:ribonucleoprotein complex"/>
    <property type="evidence" value="ECO:0007669"/>
    <property type="project" value="UniProtKB-KW"/>
</dbReference>
<dbReference type="GO" id="GO:0030515">
    <property type="term" value="F:snoRNA binding"/>
    <property type="evidence" value="ECO:0007669"/>
    <property type="project" value="InterPro"/>
</dbReference>
<dbReference type="GO" id="GO:0001522">
    <property type="term" value="P:pseudouridine synthesis"/>
    <property type="evidence" value="ECO:0007669"/>
    <property type="project" value="InterPro"/>
</dbReference>
<dbReference type="GO" id="GO:0006364">
    <property type="term" value="P:rRNA processing"/>
    <property type="evidence" value="ECO:0007669"/>
    <property type="project" value="UniProtKB-UniRule"/>
</dbReference>
<dbReference type="Gene3D" id="2.20.28.40">
    <property type="entry name" value="H/ACA ribonucleoprotein complex, subunit Nop10"/>
    <property type="match status" value="1"/>
</dbReference>
<dbReference type="HAMAP" id="MF_00803">
    <property type="entry name" value="Nop10"/>
    <property type="match status" value="1"/>
</dbReference>
<dbReference type="InterPro" id="IPR007264">
    <property type="entry name" value="H/ACA_rnp_Nop10"/>
</dbReference>
<dbReference type="InterPro" id="IPR036756">
    <property type="entry name" value="H/ACA_rnp_Nop10_sf"/>
</dbReference>
<dbReference type="InterPro" id="IPR023532">
    <property type="entry name" value="Nop10_arc-typ"/>
</dbReference>
<dbReference type="NCBIfam" id="NF009623">
    <property type="entry name" value="PRK13130.1"/>
    <property type="match status" value="1"/>
</dbReference>
<dbReference type="Pfam" id="PF04135">
    <property type="entry name" value="Nop10p"/>
    <property type="match status" value="1"/>
</dbReference>
<dbReference type="SUPFAM" id="SSF144210">
    <property type="entry name" value="Nop10-like SnoRNP"/>
    <property type="match status" value="1"/>
</dbReference>
<evidence type="ECO:0000255" key="1">
    <source>
        <dbReference type="HAMAP-Rule" id="MF_00803"/>
    </source>
</evidence>
<organism>
    <name type="scientific">Methanococcoides burtonii (strain DSM 6242 / NBRC 107633 / OCM 468 / ACE-M)</name>
    <dbReference type="NCBI Taxonomy" id="259564"/>
    <lineage>
        <taxon>Archaea</taxon>
        <taxon>Methanobacteriati</taxon>
        <taxon>Methanobacteriota</taxon>
        <taxon>Stenosarchaea group</taxon>
        <taxon>Methanomicrobia</taxon>
        <taxon>Methanosarcinales</taxon>
        <taxon>Methanosarcinaceae</taxon>
        <taxon>Methanococcoides</taxon>
    </lineage>
</organism>